<keyword id="KW-0548">Nucleotidyltransferase</keyword>
<keyword id="KW-1185">Reference proteome</keyword>
<keyword id="KW-0694">RNA-binding</keyword>
<keyword id="KW-0698">rRNA processing</keyword>
<keyword id="KW-0808">Transferase</keyword>
<keyword id="KW-0819">tRNA processing</keyword>
<keyword id="KW-0820">tRNA-binding</keyword>
<name>RNPH_SHEWM</name>
<sequence length="237" mass="25743">MRPNDRTPAQSRPVTITRQFTAHAEGSVLVEFGETKVLCTASFTEGVPRFLKGKGQGWVTAEYGMLPRSTHSRMDREAARGKQSGRTQEIQRLIGRSLRAAVDMKALGENTIVIDCDVIQADGGTRTAAITGACVALVDALNWARGKGILKNNPLKFLIAAVSVGIYKGEPICDLEYIEDSEAETDMNVVMTETGKMIEIQGTAEGEPFSHEELLSLLELAKHGIREIVDVQKAALS</sequence>
<protein>
    <recommendedName>
        <fullName evidence="1">Ribonuclease PH</fullName>
        <shortName evidence="1">RNase PH</shortName>
        <ecNumber evidence="1">2.7.7.56</ecNumber>
    </recommendedName>
    <alternativeName>
        <fullName evidence="1">tRNA nucleotidyltransferase</fullName>
    </alternativeName>
</protein>
<reference key="1">
    <citation type="submission" date="2008-02" db="EMBL/GenBank/DDBJ databases">
        <title>Complete sequence of Shewanella woodyi ATCC 51908.</title>
        <authorList>
            <consortium name="US DOE Joint Genome Institute"/>
            <person name="Copeland A."/>
            <person name="Lucas S."/>
            <person name="Lapidus A."/>
            <person name="Glavina del Rio T."/>
            <person name="Dalin E."/>
            <person name="Tice H."/>
            <person name="Bruce D."/>
            <person name="Goodwin L."/>
            <person name="Pitluck S."/>
            <person name="Sims D."/>
            <person name="Brettin T."/>
            <person name="Detter J.C."/>
            <person name="Han C."/>
            <person name="Kuske C.R."/>
            <person name="Schmutz J."/>
            <person name="Larimer F."/>
            <person name="Land M."/>
            <person name="Hauser L."/>
            <person name="Kyrpides N."/>
            <person name="Lykidis A."/>
            <person name="Zhao J.-S."/>
            <person name="Richardson P."/>
        </authorList>
    </citation>
    <scope>NUCLEOTIDE SEQUENCE [LARGE SCALE GENOMIC DNA]</scope>
    <source>
        <strain>ATCC 51908 / MS32</strain>
    </source>
</reference>
<evidence type="ECO:0000255" key="1">
    <source>
        <dbReference type="HAMAP-Rule" id="MF_00564"/>
    </source>
</evidence>
<organism>
    <name type="scientific">Shewanella woodyi (strain ATCC 51908 / MS32)</name>
    <dbReference type="NCBI Taxonomy" id="392500"/>
    <lineage>
        <taxon>Bacteria</taxon>
        <taxon>Pseudomonadati</taxon>
        <taxon>Pseudomonadota</taxon>
        <taxon>Gammaproteobacteria</taxon>
        <taxon>Alteromonadales</taxon>
        <taxon>Shewanellaceae</taxon>
        <taxon>Shewanella</taxon>
    </lineage>
</organism>
<gene>
    <name evidence="1" type="primary">rph</name>
    <name type="ordered locus">Swoo_4568</name>
</gene>
<dbReference type="EC" id="2.7.7.56" evidence="1"/>
<dbReference type="EMBL" id="CP000961">
    <property type="protein sequence ID" value="ACA88818.1"/>
    <property type="molecule type" value="Genomic_DNA"/>
</dbReference>
<dbReference type="RefSeq" id="WP_012327143.1">
    <property type="nucleotide sequence ID" value="NC_010506.1"/>
</dbReference>
<dbReference type="SMR" id="B1KL12"/>
<dbReference type="STRING" id="392500.Swoo_4568"/>
<dbReference type="KEGG" id="swd:Swoo_4568"/>
<dbReference type="eggNOG" id="COG0689">
    <property type="taxonomic scope" value="Bacteria"/>
</dbReference>
<dbReference type="HOGENOM" id="CLU_050858_0_0_6"/>
<dbReference type="Proteomes" id="UP000002168">
    <property type="component" value="Chromosome"/>
</dbReference>
<dbReference type="GO" id="GO:0000175">
    <property type="term" value="F:3'-5'-RNA exonuclease activity"/>
    <property type="evidence" value="ECO:0007669"/>
    <property type="project" value="UniProtKB-UniRule"/>
</dbReference>
<dbReference type="GO" id="GO:0000049">
    <property type="term" value="F:tRNA binding"/>
    <property type="evidence" value="ECO:0007669"/>
    <property type="project" value="UniProtKB-UniRule"/>
</dbReference>
<dbReference type="GO" id="GO:0009022">
    <property type="term" value="F:tRNA nucleotidyltransferase activity"/>
    <property type="evidence" value="ECO:0007669"/>
    <property type="project" value="UniProtKB-UniRule"/>
</dbReference>
<dbReference type="GO" id="GO:0016075">
    <property type="term" value="P:rRNA catabolic process"/>
    <property type="evidence" value="ECO:0007669"/>
    <property type="project" value="UniProtKB-UniRule"/>
</dbReference>
<dbReference type="GO" id="GO:0006364">
    <property type="term" value="P:rRNA processing"/>
    <property type="evidence" value="ECO:0007669"/>
    <property type="project" value="UniProtKB-KW"/>
</dbReference>
<dbReference type="GO" id="GO:0008033">
    <property type="term" value="P:tRNA processing"/>
    <property type="evidence" value="ECO:0007669"/>
    <property type="project" value="UniProtKB-UniRule"/>
</dbReference>
<dbReference type="CDD" id="cd11362">
    <property type="entry name" value="RNase_PH_bact"/>
    <property type="match status" value="1"/>
</dbReference>
<dbReference type="FunFam" id="3.30.230.70:FF:000003">
    <property type="entry name" value="Ribonuclease PH"/>
    <property type="match status" value="1"/>
</dbReference>
<dbReference type="Gene3D" id="3.30.230.70">
    <property type="entry name" value="GHMP Kinase, N-terminal domain"/>
    <property type="match status" value="1"/>
</dbReference>
<dbReference type="HAMAP" id="MF_00564">
    <property type="entry name" value="RNase_PH"/>
    <property type="match status" value="1"/>
</dbReference>
<dbReference type="InterPro" id="IPR001247">
    <property type="entry name" value="ExoRNase_PH_dom1"/>
</dbReference>
<dbReference type="InterPro" id="IPR015847">
    <property type="entry name" value="ExoRNase_PH_dom2"/>
</dbReference>
<dbReference type="InterPro" id="IPR036345">
    <property type="entry name" value="ExoRNase_PH_dom2_sf"/>
</dbReference>
<dbReference type="InterPro" id="IPR027408">
    <property type="entry name" value="PNPase/RNase_PH_dom_sf"/>
</dbReference>
<dbReference type="InterPro" id="IPR020568">
    <property type="entry name" value="Ribosomal_Su5_D2-typ_SF"/>
</dbReference>
<dbReference type="InterPro" id="IPR050080">
    <property type="entry name" value="RNase_PH"/>
</dbReference>
<dbReference type="InterPro" id="IPR002381">
    <property type="entry name" value="RNase_PH_bac-type"/>
</dbReference>
<dbReference type="InterPro" id="IPR018336">
    <property type="entry name" value="RNase_PH_CS"/>
</dbReference>
<dbReference type="NCBIfam" id="TIGR01966">
    <property type="entry name" value="RNasePH"/>
    <property type="match status" value="1"/>
</dbReference>
<dbReference type="PANTHER" id="PTHR11953">
    <property type="entry name" value="EXOSOME COMPLEX COMPONENT"/>
    <property type="match status" value="1"/>
</dbReference>
<dbReference type="PANTHER" id="PTHR11953:SF0">
    <property type="entry name" value="EXOSOME COMPLEX COMPONENT RRP41"/>
    <property type="match status" value="1"/>
</dbReference>
<dbReference type="Pfam" id="PF01138">
    <property type="entry name" value="RNase_PH"/>
    <property type="match status" value="1"/>
</dbReference>
<dbReference type="Pfam" id="PF03725">
    <property type="entry name" value="RNase_PH_C"/>
    <property type="match status" value="1"/>
</dbReference>
<dbReference type="SUPFAM" id="SSF55666">
    <property type="entry name" value="Ribonuclease PH domain 2-like"/>
    <property type="match status" value="1"/>
</dbReference>
<dbReference type="SUPFAM" id="SSF54211">
    <property type="entry name" value="Ribosomal protein S5 domain 2-like"/>
    <property type="match status" value="1"/>
</dbReference>
<dbReference type="PROSITE" id="PS01277">
    <property type="entry name" value="RIBONUCLEASE_PH"/>
    <property type="match status" value="1"/>
</dbReference>
<feature type="chain" id="PRO_1000129374" description="Ribonuclease PH">
    <location>
        <begin position="1"/>
        <end position="237"/>
    </location>
</feature>
<feature type="binding site" evidence="1">
    <location>
        <position position="86"/>
    </location>
    <ligand>
        <name>phosphate</name>
        <dbReference type="ChEBI" id="CHEBI:43474"/>
        <note>substrate</note>
    </ligand>
</feature>
<feature type="binding site" evidence="1">
    <location>
        <begin position="124"/>
        <end position="126"/>
    </location>
    <ligand>
        <name>phosphate</name>
        <dbReference type="ChEBI" id="CHEBI:43474"/>
        <note>substrate</note>
    </ligand>
</feature>
<accession>B1KL12</accession>
<comment type="function">
    <text evidence="1">Phosphorolytic 3'-5' exoribonuclease that plays an important role in tRNA 3'-end maturation. Removes nucleotide residues following the 3'-CCA terminus of tRNAs; can also add nucleotides to the ends of RNA molecules by using nucleoside diphosphates as substrates, but this may not be physiologically important. Probably plays a role in initiation of 16S rRNA degradation (leading to ribosome degradation) during starvation.</text>
</comment>
<comment type="catalytic activity">
    <reaction evidence="1">
        <text>tRNA(n+1) + phosphate = tRNA(n) + a ribonucleoside 5'-diphosphate</text>
        <dbReference type="Rhea" id="RHEA:10628"/>
        <dbReference type="Rhea" id="RHEA-COMP:17343"/>
        <dbReference type="Rhea" id="RHEA-COMP:17344"/>
        <dbReference type="ChEBI" id="CHEBI:43474"/>
        <dbReference type="ChEBI" id="CHEBI:57930"/>
        <dbReference type="ChEBI" id="CHEBI:173114"/>
        <dbReference type="EC" id="2.7.7.56"/>
    </reaction>
</comment>
<comment type="subunit">
    <text evidence="1">Homohexameric ring arranged as a trimer of dimers.</text>
</comment>
<comment type="similarity">
    <text evidence="1">Belongs to the RNase PH family.</text>
</comment>
<proteinExistence type="inferred from homology"/>